<accession>Q4L5T0</accession>
<reference key="1">
    <citation type="journal article" date="2005" name="J. Bacteriol.">
        <title>Whole-genome sequencing of Staphylococcus haemolyticus uncovers the extreme plasticity of its genome and the evolution of human-colonizing staphylococcal species.</title>
        <authorList>
            <person name="Takeuchi F."/>
            <person name="Watanabe S."/>
            <person name="Baba T."/>
            <person name="Yuzawa H."/>
            <person name="Ito T."/>
            <person name="Morimoto Y."/>
            <person name="Kuroda M."/>
            <person name="Cui L."/>
            <person name="Takahashi M."/>
            <person name="Ankai A."/>
            <person name="Baba S."/>
            <person name="Fukui S."/>
            <person name="Lee J.C."/>
            <person name="Hiramatsu K."/>
        </authorList>
    </citation>
    <scope>NUCLEOTIDE SEQUENCE [LARGE SCALE GENOMIC DNA]</scope>
    <source>
        <strain>JCSC1435</strain>
    </source>
</reference>
<name>FAPR_STAHJ</name>
<protein>
    <recommendedName>
        <fullName evidence="1">Transcription factor FapR</fullName>
    </recommendedName>
    <alternativeName>
        <fullName evidence="1">Fatty acid and phospholipid biosynthesis regulator</fullName>
    </alternativeName>
</protein>
<keyword id="KW-0238">DNA-binding</keyword>
<keyword id="KW-0275">Fatty acid biosynthesis</keyword>
<keyword id="KW-0276">Fatty acid metabolism</keyword>
<keyword id="KW-0444">Lipid biosynthesis</keyword>
<keyword id="KW-0443">Lipid metabolism</keyword>
<keyword id="KW-0678">Repressor</keyword>
<keyword id="KW-0804">Transcription</keyword>
<keyword id="KW-0805">Transcription regulation</keyword>
<proteinExistence type="inferred from homology"/>
<dbReference type="EMBL" id="AP006716">
    <property type="protein sequence ID" value="BAE04995.1"/>
    <property type="molecule type" value="Genomic_DNA"/>
</dbReference>
<dbReference type="RefSeq" id="WP_011275971.1">
    <property type="nucleotide sequence ID" value="NC_007168.1"/>
</dbReference>
<dbReference type="SMR" id="Q4L5T0"/>
<dbReference type="GeneID" id="93781064"/>
<dbReference type="KEGG" id="sha:SH1686"/>
<dbReference type="eggNOG" id="COG1349">
    <property type="taxonomic scope" value="Bacteria"/>
</dbReference>
<dbReference type="HOGENOM" id="CLU_095708_0_0_9"/>
<dbReference type="OrthoDB" id="1706183at2"/>
<dbReference type="Proteomes" id="UP000000543">
    <property type="component" value="Chromosome"/>
</dbReference>
<dbReference type="GO" id="GO:0003677">
    <property type="term" value="F:DNA binding"/>
    <property type="evidence" value="ECO:0007669"/>
    <property type="project" value="UniProtKB-KW"/>
</dbReference>
<dbReference type="GO" id="GO:0003700">
    <property type="term" value="F:DNA-binding transcription factor activity"/>
    <property type="evidence" value="ECO:0007669"/>
    <property type="project" value="UniProtKB-UniRule"/>
</dbReference>
<dbReference type="GO" id="GO:0006633">
    <property type="term" value="P:fatty acid biosynthetic process"/>
    <property type="evidence" value="ECO:0007669"/>
    <property type="project" value="UniProtKB-KW"/>
</dbReference>
<dbReference type="GO" id="GO:0045892">
    <property type="term" value="P:negative regulation of DNA-templated transcription"/>
    <property type="evidence" value="ECO:0007669"/>
    <property type="project" value="UniProtKB-UniRule"/>
</dbReference>
<dbReference type="GO" id="GO:0045717">
    <property type="term" value="P:negative regulation of fatty acid biosynthetic process"/>
    <property type="evidence" value="ECO:0007669"/>
    <property type="project" value="UniProtKB-UniRule"/>
</dbReference>
<dbReference type="Gene3D" id="3.10.129.10">
    <property type="entry name" value="Hotdog Thioesterase"/>
    <property type="match status" value="1"/>
</dbReference>
<dbReference type="Gene3D" id="1.10.10.10">
    <property type="entry name" value="Winged helix-like DNA-binding domain superfamily/Winged helix DNA-binding domain"/>
    <property type="match status" value="1"/>
</dbReference>
<dbReference type="HAMAP" id="MF_01814">
    <property type="entry name" value="Transcrip_fact_FapR"/>
    <property type="match status" value="1"/>
</dbReference>
<dbReference type="InterPro" id="IPR029069">
    <property type="entry name" value="HotDog_dom_sf"/>
</dbReference>
<dbReference type="InterPro" id="IPR006683">
    <property type="entry name" value="Thioestr_dom"/>
</dbReference>
<dbReference type="InterPro" id="IPR017275">
    <property type="entry name" value="Transcription_factor_FapR"/>
</dbReference>
<dbReference type="InterPro" id="IPR036388">
    <property type="entry name" value="WH-like_DNA-bd_sf"/>
</dbReference>
<dbReference type="NCBIfam" id="NF003359">
    <property type="entry name" value="PRK04424.1"/>
    <property type="match status" value="1"/>
</dbReference>
<dbReference type="Pfam" id="PF03061">
    <property type="entry name" value="4HBT"/>
    <property type="match status" value="1"/>
</dbReference>
<dbReference type="PIRSF" id="PIRSF037733">
    <property type="entry name" value="Transcription_factor_FapR"/>
    <property type="match status" value="1"/>
</dbReference>
<dbReference type="SUPFAM" id="SSF54637">
    <property type="entry name" value="Thioesterase/thiol ester dehydrase-isomerase"/>
    <property type="match status" value="1"/>
</dbReference>
<evidence type="ECO:0000255" key="1">
    <source>
        <dbReference type="HAMAP-Rule" id="MF_01814"/>
    </source>
</evidence>
<organism>
    <name type="scientific">Staphylococcus haemolyticus (strain JCSC1435)</name>
    <dbReference type="NCBI Taxonomy" id="279808"/>
    <lineage>
        <taxon>Bacteria</taxon>
        <taxon>Bacillati</taxon>
        <taxon>Bacillota</taxon>
        <taxon>Bacilli</taxon>
        <taxon>Bacillales</taxon>
        <taxon>Staphylococcaceae</taxon>
        <taxon>Staphylococcus</taxon>
    </lineage>
</organism>
<sequence length="186" mass="21288">MKLKKAERRQAIQKAIELNPFITDSELCEQFEVSIQTIRLDRTNLSIPELRKRIKLVAEQNYEQIRALEANEVVGDLIQVEPNISAQSLIEITEESVFTKTQIARGHVLFAQANSLCVALIHKSTVLTQESNVAFIEKVKLNDTVRAEAHVVNKTSHHYVIEVNSYVRDTIVFKGTFKMFYISEDE</sequence>
<comment type="function">
    <text evidence="1">Transcriptional factor involved in regulation of membrane lipid biosynthesis by repressing genes involved in fatty acid and phospholipid metabolism.</text>
</comment>
<comment type="similarity">
    <text evidence="1">Belongs to the FapR family.</text>
</comment>
<feature type="chain" id="PRO_0000172835" description="Transcription factor FapR">
    <location>
        <begin position="1"/>
        <end position="186"/>
    </location>
</feature>
<feature type="domain" description="MaoC-like">
    <location>
        <begin position="98"/>
        <end position="168"/>
    </location>
</feature>
<gene>
    <name evidence="1" type="primary">fapR</name>
    <name type="ordered locus">SH1686</name>
</gene>